<gene>
    <name evidence="1" type="primary">panD</name>
    <name type="ordered locus">Mvan_5363</name>
</gene>
<keyword id="KW-0068">Autocatalytic cleavage</keyword>
<keyword id="KW-0963">Cytoplasm</keyword>
<keyword id="KW-0210">Decarboxylase</keyword>
<keyword id="KW-0456">Lyase</keyword>
<keyword id="KW-0566">Pantothenate biosynthesis</keyword>
<keyword id="KW-0670">Pyruvate</keyword>
<keyword id="KW-0704">Schiff base</keyword>
<keyword id="KW-0865">Zymogen</keyword>
<accession>A1TG34</accession>
<proteinExistence type="inferred from homology"/>
<comment type="function">
    <text evidence="1">Catalyzes the pyruvoyl-dependent decarboxylation of aspartate to produce beta-alanine.</text>
</comment>
<comment type="catalytic activity">
    <reaction evidence="1">
        <text>L-aspartate + H(+) = beta-alanine + CO2</text>
        <dbReference type="Rhea" id="RHEA:19497"/>
        <dbReference type="ChEBI" id="CHEBI:15378"/>
        <dbReference type="ChEBI" id="CHEBI:16526"/>
        <dbReference type="ChEBI" id="CHEBI:29991"/>
        <dbReference type="ChEBI" id="CHEBI:57966"/>
        <dbReference type="EC" id="4.1.1.11"/>
    </reaction>
</comment>
<comment type="cofactor">
    <cofactor evidence="1">
        <name>pyruvate</name>
        <dbReference type="ChEBI" id="CHEBI:15361"/>
    </cofactor>
    <text evidence="1">Binds 1 pyruvoyl group covalently per subunit.</text>
</comment>
<comment type="pathway">
    <text evidence="1">Cofactor biosynthesis; (R)-pantothenate biosynthesis; beta-alanine from L-aspartate: step 1/1.</text>
</comment>
<comment type="subunit">
    <text evidence="1">Heterooctamer of four alpha and four beta subunits.</text>
</comment>
<comment type="subcellular location">
    <subcellularLocation>
        <location evidence="1">Cytoplasm</location>
    </subcellularLocation>
</comment>
<comment type="PTM">
    <text evidence="1">Is synthesized initially as an inactive proenzyme, which is activated by self-cleavage at a specific serine bond to produce a beta-subunit with a hydroxyl group at its C-terminus and an alpha-subunit with a pyruvoyl group at its N-terminus.</text>
</comment>
<comment type="similarity">
    <text evidence="1">Belongs to the PanD family.</text>
</comment>
<dbReference type="EC" id="4.1.1.11" evidence="1"/>
<dbReference type="EMBL" id="CP000511">
    <property type="protein sequence ID" value="ABM16134.1"/>
    <property type="molecule type" value="Genomic_DNA"/>
</dbReference>
<dbReference type="RefSeq" id="WP_011782502.1">
    <property type="nucleotide sequence ID" value="NZ_JACKSD010000064.1"/>
</dbReference>
<dbReference type="SMR" id="A1TG34"/>
<dbReference type="STRING" id="350058.Mvan_5363"/>
<dbReference type="KEGG" id="mva:Mvan_5363"/>
<dbReference type="eggNOG" id="COG0853">
    <property type="taxonomic scope" value="Bacteria"/>
</dbReference>
<dbReference type="HOGENOM" id="CLU_115305_2_0_11"/>
<dbReference type="UniPathway" id="UPA00028">
    <property type="reaction ID" value="UER00002"/>
</dbReference>
<dbReference type="Proteomes" id="UP000009159">
    <property type="component" value="Chromosome"/>
</dbReference>
<dbReference type="GO" id="GO:0005829">
    <property type="term" value="C:cytosol"/>
    <property type="evidence" value="ECO:0007669"/>
    <property type="project" value="TreeGrafter"/>
</dbReference>
<dbReference type="GO" id="GO:0004068">
    <property type="term" value="F:aspartate 1-decarboxylase activity"/>
    <property type="evidence" value="ECO:0007669"/>
    <property type="project" value="UniProtKB-UniRule"/>
</dbReference>
<dbReference type="GO" id="GO:0006523">
    <property type="term" value="P:alanine biosynthetic process"/>
    <property type="evidence" value="ECO:0007669"/>
    <property type="project" value="InterPro"/>
</dbReference>
<dbReference type="GO" id="GO:0015940">
    <property type="term" value="P:pantothenate biosynthetic process"/>
    <property type="evidence" value="ECO:0007669"/>
    <property type="project" value="UniProtKB-UniRule"/>
</dbReference>
<dbReference type="CDD" id="cd06919">
    <property type="entry name" value="Asp_decarbox"/>
    <property type="match status" value="1"/>
</dbReference>
<dbReference type="Gene3D" id="2.40.40.20">
    <property type="match status" value="1"/>
</dbReference>
<dbReference type="HAMAP" id="MF_00446">
    <property type="entry name" value="PanD"/>
    <property type="match status" value="1"/>
</dbReference>
<dbReference type="InterPro" id="IPR009010">
    <property type="entry name" value="Asp_de-COase-like_dom_sf"/>
</dbReference>
<dbReference type="InterPro" id="IPR003190">
    <property type="entry name" value="Asp_decarbox"/>
</dbReference>
<dbReference type="NCBIfam" id="TIGR00223">
    <property type="entry name" value="panD"/>
    <property type="match status" value="1"/>
</dbReference>
<dbReference type="PANTHER" id="PTHR21012">
    <property type="entry name" value="ASPARTATE 1-DECARBOXYLASE"/>
    <property type="match status" value="1"/>
</dbReference>
<dbReference type="PANTHER" id="PTHR21012:SF0">
    <property type="entry name" value="ASPARTATE 1-DECARBOXYLASE"/>
    <property type="match status" value="1"/>
</dbReference>
<dbReference type="Pfam" id="PF02261">
    <property type="entry name" value="Asp_decarbox"/>
    <property type="match status" value="1"/>
</dbReference>
<dbReference type="PIRSF" id="PIRSF006246">
    <property type="entry name" value="Asp_decarbox"/>
    <property type="match status" value="1"/>
</dbReference>
<dbReference type="SUPFAM" id="SSF50692">
    <property type="entry name" value="ADC-like"/>
    <property type="match status" value="1"/>
</dbReference>
<protein>
    <recommendedName>
        <fullName evidence="1">Aspartate 1-decarboxylase</fullName>
        <ecNumber evidence="1">4.1.1.11</ecNumber>
    </recommendedName>
    <alternativeName>
        <fullName evidence="1">Aspartate alpha-decarboxylase</fullName>
    </alternativeName>
    <component>
        <recommendedName>
            <fullName evidence="1">Aspartate 1-decarboxylase beta chain</fullName>
        </recommendedName>
    </component>
    <component>
        <recommendedName>
            <fullName evidence="1">Aspartate 1-decarboxylase alpha chain</fullName>
        </recommendedName>
    </component>
</protein>
<name>PAND_MYCVP</name>
<organism>
    <name type="scientific">Mycolicibacterium vanbaalenii (strain DSM 7251 / JCM 13017 / BCRC 16820 / KCTC 9966 / NRRL B-24157 / PYR-1)</name>
    <name type="common">Mycobacterium vanbaalenii</name>
    <dbReference type="NCBI Taxonomy" id="350058"/>
    <lineage>
        <taxon>Bacteria</taxon>
        <taxon>Bacillati</taxon>
        <taxon>Actinomycetota</taxon>
        <taxon>Actinomycetes</taxon>
        <taxon>Mycobacteriales</taxon>
        <taxon>Mycobacteriaceae</taxon>
        <taxon>Mycolicibacterium</taxon>
    </lineage>
</organism>
<evidence type="ECO:0000255" key="1">
    <source>
        <dbReference type="HAMAP-Rule" id="MF_00446"/>
    </source>
</evidence>
<sequence length="135" mass="14483">MFRTMLKSKIHRATVTQADLHYVGSVTVDADLMDAADLIEGEQVTIVDIENGARLVTYVITGERGSGVIGINGAAAHLVHPGDLVILIAYGTMEDAEARAYRPRVVFVDADNRPIDLGVDPAYVPPDAGELLSPR</sequence>
<feature type="chain" id="PRO_0000307033" description="Aspartate 1-decarboxylase beta chain" evidence="1">
    <location>
        <begin position="1"/>
        <end position="24"/>
    </location>
</feature>
<feature type="chain" id="PRO_0000307034" description="Aspartate 1-decarboxylase alpha chain" evidence="1">
    <location>
        <begin position="25"/>
        <end position="135"/>
    </location>
</feature>
<feature type="active site" description="Schiff-base intermediate with substrate; via pyruvic acid" evidence="1">
    <location>
        <position position="25"/>
    </location>
</feature>
<feature type="active site" description="Proton donor" evidence="1">
    <location>
        <position position="58"/>
    </location>
</feature>
<feature type="binding site" evidence="1">
    <location>
        <position position="57"/>
    </location>
    <ligand>
        <name>substrate</name>
    </ligand>
</feature>
<feature type="binding site" evidence="1">
    <location>
        <begin position="73"/>
        <end position="75"/>
    </location>
    <ligand>
        <name>substrate</name>
    </ligand>
</feature>
<feature type="modified residue" description="Pyruvic acid (Ser)" evidence="1">
    <location>
        <position position="25"/>
    </location>
</feature>
<reference key="1">
    <citation type="submission" date="2006-12" db="EMBL/GenBank/DDBJ databases">
        <title>Complete sequence of Mycobacterium vanbaalenii PYR-1.</title>
        <authorList>
            <consortium name="US DOE Joint Genome Institute"/>
            <person name="Copeland A."/>
            <person name="Lucas S."/>
            <person name="Lapidus A."/>
            <person name="Barry K."/>
            <person name="Detter J.C."/>
            <person name="Glavina del Rio T."/>
            <person name="Hammon N."/>
            <person name="Israni S."/>
            <person name="Dalin E."/>
            <person name="Tice H."/>
            <person name="Pitluck S."/>
            <person name="Singan V."/>
            <person name="Schmutz J."/>
            <person name="Larimer F."/>
            <person name="Land M."/>
            <person name="Hauser L."/>
            <person name="Kyrpides N."/>
            <person name="Anderson I.J."/>
            <person name="Miller C."/>
            <person name="Richardson P."/>
        </authorList>
    </citation>
    <scope>NUCLEOTIDE SEQUENCE [LARGE SCALE GENOMIC DNA]</scope>
    <source>
        <strain>DSM 7251 / JCM 13017 / BCRC 16820 / KCTC 9966 / NRRL B-24157 / PYR-1</strain>
    </source>
</reference>